<name>RL22_HELPH</name>
<gene>
    <name evidence="1" type="primary">rplV</name>
    <name type="ordered locus">HPAG1_1259</name>
</gene>
<reference key="1">
    <citation type="journal article" date="2006" name="Proc. Natl. Acad. Sci. U.S.A.">
        <title>The complete genome sequence of a chronic atrophic gastritis Helicobacter pylori strain: evolution during disease progression.</title>
        <authorList>
            <person name="Oh J.D."/>
            <person name="Kling-Baeckhed H."/>
            <person name="Giannakis M."/>
            <person name="Xu J."/>
            <person name="Fulton R.S."/>
            <person name="Fulton L.A."/>
            <person name="Cordum H.S."/>
            <person name="Wang C."/>
            <person name="Elliott G."/>
            <person name="Edwards J."/>
            <person name="Mardis E.R."/>
            <person name="Engstrand L.G."/>
            <person name="Gordon J.I."/>
        </authorList>
    </citation>
    <scope>NUCLEOTIDE SEQUENCE [LARGE SCALE GENOMIC DNA]</scope>
    <source>
        <strain>HPAG1</strain>
    </source>
</reference>
<comment type="function">
    <text evidence="1">This protein binds specifically to 23S rRNA; its binding is stimulated by other ribosomal proteins, e.g. L4, L17, and L20. It is important during the early stages of 50S assembly. It makes multiple contacts with different domains of the 23S rRNA in the assembled 50S subunit and ribosome (By similarity).</text>
</comment>
<comment type="function">
    <text evidence="1">The globular domain of the protein is located near the polypeptide exit tunnel on the outside of the subunit, while an extended beta-hairpin is found that lines the wall of the exit tunnel in the center of the 70S ribosome.</text>
</comment>
<comment type="subunit">
    <text evidence="1">Part of the 50S ribosomal subunit.</text>
</comment>
<comment type="similarity">
    <text evidence="1">Belongs to the universal ribosomal protein uL22 family.</text>
</comment>
<accession>Q1CRU6</accession>
<keyword id="KW-0687">Ribonucleoprotein</keyword>
<keyword id="KW-0689">Ribosomal protein</keyword>
<keyword id="KW-0694">RNA-binding</keyword>
<keyword id="KW-0699">rRNA-binding</keyword>
<evidence type="ECO:0000255" key="1">
    <source>
        <dbReference type="HAMAP-Rule" id="MF_01331"/>
    </source>
</evidence>
<evidence type="ECO:0000256" key="2">
    <source>
        <dbReference type="SAM" id="MobiDB-lite"/>
    </source>
</evidence>
<evidence type="ECO:0000305" key="3"/>
<organism>
    <name type="scientific">Helicobacter pylori (strain HPAG1)</name>
    <dbReference type="NCBI Taxonomy" id="357544"/>
    <lineage>
        <taxon>Bacteria</taxon>
        <taxon>Pseudomonadati</taxon>
        <taxon>Campylobacterota</taxon>
        <taxon>Epsilonproteobacteria</taxon>
        <taxon>Campylobacterales</taxon>
        <taxon>Helicobacteraceae</taxon>
        <taxon>Helicobacter</taxon>
    </lineage>
</organism>
<feature type="chain" id="PRO_1000052583" description="Large ribosomal subunit protein uL22">
    <location>
        <begin position="1"/>
        <end position="122"/>
    </location>
</feature>
<feature type="region of interest" description="Disordered" evidence="2">
    <location>
        <begin position="102"/>
        <end position="122"/>
    </location>
</feature>
<dbReference type="EMBL" id="CP000241">
    <property type="protein sequence ID" value="ABF85326.1"/>
    <property type="molecule type" value="Genomic_DNA"/>
</dbReference>
<dbReference type="RefSeq" id="WP_000030349.1">
    <property type="nucleotide sequence ID" value="NC_008086.1"/>
</dbReference>
<dbReference type="SMR" id="Q1CRU6"/>
<dbReference type="KEGG" id="hpa:HPAG1_1259"/>
<dbReference type="HOGENOM" id="CLU_083987_3_2_7"/>
<dbReference type="GO" id="GO:0022625">
    <property type="term" value="C:cytosolic large ribosomal subunit"/>
    <property type="evidence" value="ECO:0007669"/>
    <property type="project" value="TreeGrafter"/>
</dbReference>
<dbReference type="GO" id="GO:0019843">
    <property type="term" value="F:rRNA binding"/>
    <property type="evidence" value="ECO:0007669"/>
    <property type="project" value="UniProtKB-UniRule"/>
</dbReference>
<dbReference type="GO" id="GO:0003735">
    <property type="term" value="F:structural constituent of ribosome"/>
    <property type="evidence" value="ECO:0007669"/>
    <property type="project" value="InterPro"/>
</dbReference>
<dbReference type="GO" id="GO:0006412">
    <property type="term" value="P:translation"/>
    <property type="evidence" value="ECO:0007669"/>
    <property type="project" value="UniProtKB-UniRule"/>
</dbReference>
<dbReference type="CDD" id="cd00336">
    <property type="entry name" value="Ribosomal_L22"/>
    <property type="match status" value="1"/>
</dbReference>
<dbReference type="FunFam" id="3.90.470.10:FF:000007">
    <property type="entry name" value="50S ribosomal protein L22"/>
    <property type="match status" value="1"/>
</dbReference>
<dbReference type="Gene3D" id="3.90.470.10">
    <property type="entry name" value="Ribosomal protein L22/L17"/>
    <property type="match status" value="1"/>
</dbReference>
<dbReference type="HAMAP" id="MF_01331_B">
    <property type="entry name" value="Ribosomal_uL22_B"/>
    <property type="match status" value="1"/>
</dbReference>
<dbReference type="InterPro" id="IPR001063">
    <property type="entry name" value="Ribosomal_uL22"/>
</dbReference>
<dbReference type="InterPro" id="IPR005727">
    <property type="entry name" value="Ribosomal_uL22_bac/chlpt-type"/>
</dbReference>
<dbReference type="InterPro" id="IPR047867">
    <property type="entry name" value="Ribosomal_uL22_bac/org-type"/>
</dbReference>
<dbReference type="InterPro" id="IPR018260">
    <property type="entry name" value="Ribosomal_uL22_CS"/>
</dbReference>
<dbReference type="InterPro" id="IPR036394">
    <property type="entry name" value="Ribosomal_uL22_sf"/>
</dbReference>
<dbReference type="NCBIfam" id="TIGR01044">
    <property type="entry name" value="rplV_bact"/>
    <property type="match status" value="1"/>
</dbReference>
<dbReference type="PANTHER" id="PTHR13501">
    <property type="entry name" value="CHLOROPLAST 50S RIBOSOMAL PROTEIN L22-RELATED"/>
    <property type="match status" value="1"/>
</dbReference>
<dbReference type="PANTHER" id="PTHR13501:SF8">
    <property type="entry name" value="LARGE RIBOSOMAL SUBUNIT PROTEIN UL22M"/>
    <property type="match status" value="1"/>
</dbReference>
<dbReference type="Pfam" id="PF00237">
    <property type="entry name" value="Ribosomal_L22"/>
    <property type="match status" value="1"/>
</dbReference>
<dbReference type="SUPFAM" id="SSF54843">
    <property type="entry name" value="Ribosomal protein L22"/>
    <property type="match status" value="1"/>
</dbReference>
<dbReference type="PROSITE" id="PS00464">
    <property type="entry name" value="RIBOSOMAL_L22"/>
    <property type="match status" value="1"/>
</dbReference>
<sequence>MSKALLKFVRLSPTKARLIARQIQGMNAELAIASLEFTPNKAARVLSKVVASAVANGSLDAKSALIVSCRVDAGPVLRRSIPRAKGRATAIRKPTSHVFVEVAEGKEMKSSKSHKKNQAEGK</sequence>
<proteinExistence type="inferred from homology"/>
<protein>
    <recommendedName>
        <fullName evidence="1">Large ribosomal subunit protein uL22</fullName>
    </recommendedName>
    <alternativeName>
        <fullName evidence="3">50S ribosomal protein L22</fullName>
    </alternativeName>
</protein>